<protein>
    <recommendedName>
        <fullName>HTH-type transcriptional regulator EcpR</fullName>
    </recommendedName>
</protein>
<proteinExistence type="evidence at protein level"/>
<evidence type="ECO:0000250" key="1"/>
<evidence type="ECO:0000255" key="2">
    <source>
        <dbReference type="PROSITE-ProRule" id="PRU00411"/>
    </source>
</evidence>
<evidence type="ECO:0000269" key="3">
    <source>
    </source>
</evidence>
<evidence type="ECO:0000305" key="4"/>
<comment type="function">
    <text evidence="1 3">Part of the ecpRABCDE operon, which encodes the E.coli common pilus (ECP). ECP is found in both commensal and pathogenic strains and plays a dual role in early-stage biofilm development and host cell recognition (By similarity). Positively regulates the expression of the ecp operon by binding to two TTCCT boxes.</text>
</comment>
<comment type="subcellular location">
    <subcellularLocation>
        <location evidence="4">Cytoplasm</location>
    </subcellularLocation>
</comment>
<comment type="induction">
    <text evidence="3">Negatively regulated by H-NS. Positively autoregulated. Also positively regulated by IHF.</text>
</comment>
<comment type="similarity">
    <text evidence="4">Belongs to the EcpR/MatA family.</text>
</comment>
<comment type="sequence caution" evidence="4">
    <conflict type="erroneous initiation">
        <sequence resource="EMBL-CDS" id="BAB33747"/>
    </conflict>
    <text>Truncated N-terminus.</text>
</comment>
<keyword id="KW-0010">Activator</keyword>
<keyword id="KW-0963">Cytoplasm</keyword>
<keyword id="KW-0238">DNA-binding</keyword>
<keyword id="KW-1185">Reference proteome</keyword>
<keyword id="KW-0804">Transcription</keyword>
<keyword id="KW-0805">Transcription regulation</keyword>
<sequence length="196" mass="23300">MTWQNDYSRDYEVENHMECQNRSDKYIWSPHDAYFYKGLSELIVDIDRLIYLSLEKIRKDFVFINLNTDSLTEFINRDNEWLSAVKGKQVVLIAARKSEALANYWYYNSNIRGVVYAGLSRDIRKELAYVINGRFLRKDIKKDKITDREMEIIRMTAQGMLPKSIARIENCSVKTVYTHRRNAEAKLYSKLYKLVQ</sequence>
<organism>
    <name type="scientific">Escherichia coli O157:H7</name>
    <dbReference type="NCBI Taxonomy" id="83334"/>
    <lineage>
        <taxon>Bacteria</taxon>
        <taxon>Pseudomonadati</taxon>
        <taxon>Pseudomonadota</taxon>
        <taxon>Gammaproteobacteria</taxon>
        <taxon>Enterobacterales</taxon>
        <taxon>Enterobacteriaceae</taxon>
        <taxon>Escherichia</taxon>
    </lineage>
</organism>
<gene>
    <name type="primary">ecpR</name>
    <name type="synonym">matA</name>
    <name type="ordered locus">Z0361</name>
    <name type="ordered locus">ECs0324</name>
</gene>
<feature type="chain" id="PRO_0000369179" description="HTH-type transcriptional regulator EcpR">
    <location>
        <begin position="1"/>
        <end position="196"/>
    </location>
</feature>
<feature type="domain" description="HTH luxR-type" evidence="2">
    <location>
        <begin position="138"/>
        <end position="196"/>
    </location>
</feature>
<feature type="DNA-binding region" description="H-T-H motif" evidence="2">
    <location>
        <begin position="162"/>
        <end position="181"/>
    </location>
</feature>
<accession>Q8X6I1</accession>
<accession>Q7AHC0</accession>
<dbReference type="EMBL" id="AE005174">
    <property type="protein sequence ID" value="AAG54619.1"/>
    <property type="molecule type" value="Genomic_DNA"/>
</dbReference>
<dbReference type="EMBL" id="BA000007">
    <property type="protein sequence ID" value="BAB33747.2"/>
    <property type="status" value="ALT_INIT"/>
    <property type="molecule type" value="Genomic_DNA"/>
</dbReference>
<dbReference type="PIR" id="D90669">
    <property type="entry name" value="D90669"/>
</dbReference>
<dbReference type="PIR" id="G85519">
    <property type="entry name" value="G85519"/>
</dbReference>
<dbReference type="RefSeq" id="NP_308351.1">
    <property type="nucleotide sequence ID" value="NC_002695.1"/>
</dbReference>
<dbReference type="SMR" id="Q8X6I1"/>
<dbReference type="STRING" id="155864.Z0361"/>
<dbReference type="GeneID" id="914423"/>
<dbReference type="KEGG" id="ece:Z0361"/>
<dbReference type="KEGG" id="ecs:ECs_0324"/>
<dbReference type="PATRIC" id="fig|386585.9.peg.418"/>
<dbReference type="eggNOG" id="COG2771">
    <property type="taxonomic scope" value="Bacteria"/>
</dbReference>
<dbReference type="HOGENOM" id="CLU_128111_0_0_6"/>
<dbReference type="OMA" id="CIWPAHD"/>
<dbReference type="Proteomes" id="UP000000558">
    <property type="component" value="Chromosome"/>
</dbReference>
<dbReference type="Proteomes" id="UP000002519">
    <property type="component" value="Chromosome"/>
</dbReference>
<dbReference type="GO" id="GO:0005737">
    <property type="term" value="C:cytoplasm"/>
    <property type="evidence" value="ECO:0007669"/>
    <property type="project" value="UniProtKB-SubCell"/>
</dbReference>
<dbReference type="GO" id="GO:0003677">
    <property type="term" value="F:DNA binding"/>
    <property type="evidence" value="ECO:0007669"/>
    <property type="project" value="UniProtKB-KW"/>
</dbReference>
<dbReference type="GO" id="GO:0006355">
    <property type="term" value="P:regulation of DNA-templated transcription"/>
    <property type="evidence" value="ECO:0007669"/>
    <property type="project" value="InterPro"/>
</dbReference>
<dbReference type="CDD" id="cd06170">
    <property type="entry name" value="LuxR_C_like"/>
    <property type="match status" value="1"/>
</dbReference>
<dbReference type="Gene3D" id="1.10.10.10">
    <property type="entry name" value="Winged helix-like DNA-binding domain superfamily/Winged helix DNA-binding domain"/>
    <property type="match status" value="1"/>
</dbReference>
<dbReference type="InterPro" id="IPR016032">
    <property type="entry name" value="Sig_transdc_resp-reg_C-effctor"/>
</dbReference>
<dbReference type="InterPro" id="IPR000792">
    <property type="entry name" value="Tscrpt_reg_LuxR_C"/>
</dbReference>
<dbReference type="InterPro" id="IPR036388">
    <property type="entry name" value="WH-like_DNA-bd_sf"/>
</dbReference>
<dbReference type="Pfam" id="PF00196">
    <property type="entry name" value="GerE"/>
    <property type="match status" value="1"/>
</dbReference>
<dbReference type="PRINTS" id="PR00038">
    <property type="entry name" value="HTHLUXR"/>
</dbReference>
<dbReference type="SMART" id="SM00421">
    <property type="entry name" value="HTH_LUXR"/>
    <property type="match status" value="1"/>
</dbReference>
<dbReference type="SUPFAM" id="SSF46894">
    <property type="entry name" value="C-terminal effector domain of the bipartite response regulators"/>
    <property type="match status" value="1"/>
</dbReference>
<dbReference type="PROSITE" id="PS50043">
    <property type="entry name" value="HTH_LUXR_2"/>
    <property type="match status" value="1"/>
</dbReference>
<reference key="1">
    <citation type="journal article" date="2001" name="Nature">
        <title>Genome sequence of enterohaemorrhagic Escherichia coli O157:H7.</title>
        <authorList>
            <person name="Perna N.T."/>
            <person name="Plunkett G. III"/>
            <person name="Burland V."/>
            <person name="Mau B."/>
            <person name="Glasner J.D."/>
            <person name="Rose D.J."/>
            <person name="Mayhew G.F."/>
            <person name="Evans P.S."/>
            <person name="Gregor J."/>
            <person name="Kirkpatrick H.A."/>
            <person name="Posfai G."/>
            <person name="Hackett J."/>
            <person name="Klink S."/>
            <person name="Boutin A."/>
            <person name="Shao Y."/>
            <person name="Miller L."/>
            <person name="Grotbeck E.J."/>
            <person name="Davis N.W."/>
            <person name="Lim A."/>
            <person name="Dimalanta E.T."/>
            <person name="Potamousis K."/>
            <person name="Apodaca J."/>
            <person name="Anantharaman T.S."/>
            <person name="Lin J."/>
            <person name="Yen G."/>
            <person name="Schwartz D.C."/>
            <person name="Welch R.A."/>
            <person name="Blattner F.R."/>
        </authorList>
    </citation>
    <scope>NUCLEOTIDE SEQUENCE [LARGE SCALE GENOMIC DNA]</scope>
    <source>
        <strain>O157:H7 / EDL933 / ATCC 700927 / EHEC</strain>
    </source>
</reference>
<reference key="2">
    <citation type="journal article" date="2001" name="DNA Res.">
        <title>Complete genome sequence of enterohemorrhagic Escherichia coli O157:H7 and genomic comparison with a laboratory strain K-12.</title>
        <authorList>
            <person name="Hayashi T."/>
            <person name="Makino K."/>
            <person name="Ohnishi M."/>
            <person name="Kurokawa K."/>
            <person name="Ishii K."/>
            <person name="Yokoyama K."/>
            <person name="Han C.-G."/>
            <person name="Ohtsubo E."/>
            <person name="Nakayama K."/>
            <person name="Murata T."/>
            <person name="Tanaka M."/>
            <person name="Tobe T."/>
            <person name="Iida T."/>
            <person name="Takami H."/>
            <person name="Honda T."/>
            <person name="Sasakawa C."/>
            <person name="Ogasawara N."/>
            <person name="Yasunaga T."/>
            <person name="Kuhara S."/>
            <person name="Shiba T."/>
            <person name="Hattori M."/>
            <person name="Shinagawa H."/>
        </authorList>
    </citation>
    <scope>NUCLEOTIDE SEQUENCE [LARGE SCALE GENOMIC DNA]</scope>
    <source>
        <strain>O157:H7 / Sakai / RIMD 0509952 / EHEC</strain>
    </source>
</reference>
<reference key="3">
    <citation type="journal article" date="2012" name="J. Bacteriol.">
        <title>Transcriptional regulation of the ecp operon by EcpR, IHF, and H-NS in attaching and effacing Escherichia coli.</title>
        <authorList>
            <person name="Martinez-Santos V.I."/>
            <person name="Medrano-Lopez A."/>
            <person name="Saldana Z."/>
            <person name="Giron J.A."/>
            <person name="Puente J.L."/>
        </authorList>
    </citation>
    <scope>FUNCTION</scope>
    <scope>DNA-BINDING</scope>
    <scope>INDUCTION</scope>
    <source>
        <strain>O157:H7 / EDL933 / ATCC 700927 / EHEC</strain>
    </source>
</reference>
<name>ECPR_ECO57</name>